<gene>
    <name evidence="1" type="primary">cmoB</name>
    <name type="ordered locus">EcolC_1761</name>
</gene>
<reference key="1">
    <citation type="submission" date="2008-02" db="EMBL/GenBank/DDBJ databases">
        <title>Complete sequence of Escherichia coli C str. ATCC 8739.</title>
        <authorList>
            <person name="Copeland A."/>
            <person name="Lucas S."/>
            <person name="Lapidus A."/>
            <person name="Glavina del Rio T."/>
            <person name="Dalin E."/>
            <person name="Tice H."/>
            <person name="Bruce D."/>
            <person name="Goodwin L."/>
            <person name="Pitluck S."/>
            <person name="Kiss H."/>
            <person name="Brettin T."/>
            <person name="Detter J.C."/>
            <person name="Han C."/>
            <person name="Kuske C.R."/>
            <person name="Schmutz J."/>
            <person name="Larimer F."/>
            <person name="Land M."/>
            <person name="Hauser L."/>
            <person name="Kyrpides N."/>
            <person name="Mikhailova N."/>
            <person name="Ingram L."/>
            <person name="Richardson P."/>
        </authorList>
    </citation>
    <scope>NUCLEOTIDE SEQUENCE [LARGE SCALE GENOMIC DNA]</scope>
    <source>
        <strain>ATCC 8739 / DSM 1576 / NBRC 3972 / NCIMB 8545 / WDCM 00012 / Crooks</strain>
    </source>
</reference>
<sequence>MIDFGNFYSLIAKNHLSHWLETLPAQIANWQREQQHGLFKQWSNAVEFLPEIKPYRLDLLHSVTAESEEPLSAGQIKRIETLMRNLMPWRKGPFSLYGVNIDTEWRSDWKWDRVLPHLSDLTGRTILDVGCGSGYHMWRMIGAGAHLAVGIDPTQLFLCQFEAVRKLLGNDQRAHLLPLGIEQLPALKAFDTVFSMGVLYHRRSPLEHLWQLKDQLVNEGELVLETLVIDGDENTVLVPGDRYAQMRNVYFIPSALALKNWLKKCGFVDIRIADVSVTTTEEQRRTEWMVTESLADFLDPHDPSKTVEGYPAPKRAVLIARKP</sequence>
<dbReference type="EC" id="2.5.1.-" evidence="1"/>
<dbReference type="EMBL" id="CP000946">
    <property type="protein sequence ID" value="ACA77411.1"/>
    <property type="molecule type" value="Genomic_DNA"/>
</dbReference>
<dbReference type="RefSeq" id="WP_000564726.1">
    <property type="nucleotide sequence ID" value="NZ_MTFT01000011.1"/>
</dbReference>
<dbReference type="SMR" id="B1J0L7"/>
<dbReference type="KEGG" id="ecl:EcolC_1761"/>
<dbReference type="HOGENOM" id="CLU_052665_0_0_6"/>
<dbReference type="GO" id="GO:0008168">
    <property type="term" value="F:methyltransferase activity"/>
    <property type="evidence" value="ECO:0007669"/>
    <property type="project" value="TreeGrafter"/>
</dbReference>
<dbReference type="GO" id="GO:0016765">
    <property type="term" value="F:transferase activity, transferring alkyl or aryl (other than methyl) groups"/>
    <property type="evidence" value="ECO:0007669"/>
    <property type="project" value="UniProtKB-UniRule"/>
</dbReference>
<dbReference type="GO" id="GO:0002098">
    <property type="term" value="P:tRNA wobble uridine modification"/>
    <property type="evidence" value="ECO:0007669"/>
    <property type="project" value="InterPro"/>
</dbReference>
<dbReference type="CDD" id="cd02440">
    <property type="entry name" value="AdoMet_MTases"/>
    <property type="match status" value="1"/>
</dbReference>
<dbReference type="FunFam" id="3.40.50.150:FF:000080">
    <property type="entry name" value="tRNA U34 carboxymethyltransferase"/>
    <property type="match status" value="1"/>
</dbReference>
<dbReference type="Gene3D" id="3.40.50.150">
    <property type="entry name" value="Vaccinia Virus protein VP39"/>
    <property type="match status" value="1"/>
</dbReference>
<dbReference type="HAMAP" id="MF_01590">
    <property type="entry name" value="tRNA_carboxymethyltr_CmoB"/>
    <property type="match status" value="1"/>
</dbReference>
<dbReference type="InterPro" id="IPR010017">
    <property type="entry name" value="CmoB"/>
</dbReference>
<dbReference type="InterPro" id="IPR027555">
    <property type="entry name" value="Mo5U34_MeTrfas-like"/>
</dbReference>
<dbReference type="InterPro" id="IPR029063">
    <property type="entry name" value="SAM-dependent_MTases_sf"/>
</dbReference>
<dbReference type="NCBIfam" id="NF011650">
    <property type="entry name" value="PRK15068.1"/>
    <property type="match status" value="1"/>
</dbReference>
<dbReference type="NCBIfam" id="TIGR00452">
    <property type="entry name" value="tRNA 5-methoxyuridine(34)/uridine 5-oxyacetic acid(34) synthase CmoB"/>
    <property type="match status" value="1"/>
</dbReference>
<dbReference type="PANTHER" id="PTHR43464">
    <property type="entry name" value="METHYLTRANSFERASE"/>
    <property type="match status" value="1"/>
</dbReference>
<dbReference type="PANTHER" id="PTHR43464:SF95">
    <property type="entry name" value="TRNA U34 CARBOXYMETHYLTRANSFERASE"/>
    <property type="match status" value="1"/>
</dbReference>
<dbReference type="Pfam" id="PF08003">
    <property type="entry name" value="Methyltransf_9"/>
    <property type="match status" value="1"/>
</dbReference>
<dbReference type="SUPFAM" id="SSF53335">
    <property type="entry name" value="S-adenosyl-L-methionine-dependent methyltransferases"/>
    <property type="match status" value="1"/>
</dbReference>
<name>CMOB_ECOLC</name>
<comment type="function">
    <text evidence="1">Catalyzes carboxymethyl transfer from carboxy-S-adenosyl-L-methionine (Cx-SAM) to 5-hydroxyuridine (ho5U) to form 5-carboxymethoxyuridine (cmo5U) at position 34 in tRNAs.</text>
</comment>
<comment type="catalytic activity">
    <reaction evidence="1">
        <text>carboxy-S-adenosyl-L-methionine + 5-hydroxyuridine(34) in tRNA = 5-carboxymethoxyuridine(34) in tRNA + S-adenosyl-L-homocysteine + H(+)</text>
        <dbReference type="Rhea" id="RHEA:52848"/>
        <dbReference type="Rhea" id="RHEA-COMP:13381"/>
        <dbReference type="Rhea" id="RHEA-COMP:13383"/>
        <dbReference type="ChEBI" id="CHEBI:15378"/>
        <dbReference type="ChEBI" id="CHEBI:57856"/>
        <dbReference type="ChEBI" id="CHEBI:134278"/>
        <dbReference type="ChEBI" id="CHEBI:136877"/>
        <dbReference type="ChEBI" id="CHEBI:136879"/>
    </reaction>
</comment>
<comment type="subunit">
    <text evidence="1">Homotetramer.</text>
</comment>
<comment type="similarity">
    <text evidence="1">Belongs to the class I-like SAM-binding methyltransferase superfamily. CmoB family.</text>
</comment>
<protein>
    <recommendedName>
        <fullName evidence="1">tRNA U34 carboxymethyltransferase</fullName>
        <ecNumber evidence="1">2.5.1.-</ecNumber>
    </recommendedName>
</protein>
<accession>B1J0L7</accession>
<organism>
    <name type="scientific">Escherichia coli (strain ATCC 8739 / DSM 1576 / NBRC 3972 / NCIMB 8545 / WDCM 00012 / Crooks)</name>
    <dbReference type="NCBI Taxonomy" id="481805"/>
    <lineage>
        <taxon>Bacteria</taxon>
        <taxon>Pseudomonadati</taxon>
        <taxon>Pseudomonadota</taxon>
        <taxon>Gammaproteobacteria</taxon>
        <taxon>Enterobacterales</taxon>
        <taxon>Enterobacteriaceae</taxon>
        <taxon>Escherichia</taxon>
    </lineage>
</organism>
<evidence type="ECO:0000255" key="1">
    <source>
        <dbReference type="HAMAP-Rule" id="MF_01590"/>
    </source>
</evidence>
<proteinExistence type="inferred from homology"/>
<feature type="chain" id="PRO_1000087967" description="tRNA U34 carboxymethyltransferase">
    <location>
        <begin position="1"/>
        <end position="323"/>
    </location>
</feature>
<feature type="binding site" evidence="1">
    <location>
        <position position="91"/>
    </location>
    <ligand>
        <name>carboxy-S-adenosyl-L-methionine</name>
        <dbReference type="ChEBI" id="CHEBI:134278"/>
    </ligand>
</feature>
<feature type="binding site" evidence="1">
    <location>
        <position position="105"/>
    </location>
    <ligand>
        <name>carboxy-S-adenosyl-L-methionine</name>
        <dbReference type="ChEBI" id="CHEBI:134278"/>
    </ligand>
</feature>
<feature type="binding site" evidence="1">
    <location>
        <position position="110"/>
    </location>
    <ligand>
        <name>carboxy-S-adenosyl-L-methionine</name>
        <dbReference type="ChEBI" id="CHEBI:134278"/>
    </ligand>
</feature>
<feature type="binding site" evidence="1">
    <location>
        <position position="130"/>
    </location>
    <ligand>
        <name>carboxy-S-adenosyl-L-methionine</name>
        <dbReference type="ChEBI" id="CHEBI:134278"/>
    </ligand>
</feature>
<feature type="binding site" evidence="1">
    <location>
        <begin position="152"/>
        <end position="154"/>
    </location>
    <ligand>
        <name>carboxy-S-adenosyl-L-methionine</name>
        <dbReference type="ChEBI" id="CHEBI:134278"/>
    </ligand>
</feature>
<feature type="binding site" evidence="1">
    <location>
        <begin position="181"/>
        <end position="182"/>
    </location>
    <ligand>
        <name>carboxy-S-adenosyl-L-methionine</name>
        <dbReference type="ChEBI" id="CHEBI:134278"/>
    </ligand>
</feature>
<feature type="binding site" evidence="1">
    <location>
        <position position="196"/>
    </location>
    <ligand>
        <name>carboxy-S-adenosyl-L-methionine</name>
        <dbReference type="ChEBI" id="CHEBI:134278"/>
    </ligand>
</feature>
<feature type="binding site" evidence="1">
    <location>
        <position position="200"/>
    </location>
    <ligand>
        <name>carboxy-S-adenosyl-L-methionine</name>
        <dbReference type="ChEBI" id="CHEBI:134278"/>
    </ligand>
</feature>
<feature type="binding site" evidence="1">
    <location>
        <position position="315"/>
    </location>
    <ligand>
        <name>carboxy-S-adenosyl-L-methionine</name>
        <dbReference type="ChEBI" id="CHEBI:134278"/>
    </ligand>
</feature>
<keyword id="KW-0808">Transferase</keyword>
<keyword id="KW-0819">tRNA processing</keyword>